<protein>
    <recommendedName>
        <fullName>Guanine nucleotide-binding protein G(I)/G(S)/G(T) subunit beta-1</fullName>
    </recommendedName>
    <alternativeName>
        <fullName>Transducin beta chain 1</fullName>
    </alternativeName>
    <alternativeName>
        <fullName>XGbeta1</fullName>
    </alternativeName>
</protein>
<keyword id="KW-1185">Reference proteome</keyword>
<keyword id="KW-0677">Repeat</keyword>
<keyword id="KW-0807">Transducer</keyword>
<keyword id="KW-0853">WD repeat</keyword>
<comment type="function">
    <text>Guanine nucleotide-binding proteins (G proteins) are involved as a modulator or transducer in various transmembrane signaling systems. The beta and gamma chains are required for the GTPase activity, for replacement of GDP by GTP, and for G protein-effector interaction.</text>
</comment>
<comment type="subunit">
    <text>G proteins are composed of 3 units, alpha, beta and gamma.</text>
</comment>
<comment type="similarity">
    <text evidence="1">Belongs to the WD repeat G protein beta family.</text>
</comment>
<sequence>MSELDQLRQEAEQLKNQIRDARKACADATLAQITANIDPVGRIQMRTRRTLRGHLAKIYAMHWGTDSRLLVSASQDGKLIIWDSYTTNKVHAIPLRSSWVMTCAYAPSGNYVACGGLDNICPIYNLKTREGNVRVSRELAGHTGYLSCCRFLDDNQIITSSGDTTCALWDIETGQQTTTFTGHTGDVMSLSLAPDSRCFVSGACDASAKLWDVREGMCRQTFTGHESDINAICFFPNGNAFATGSDDATCRLFDLRADQELMVYSHDNIICGITSVAFSKSGRLLLAGYDDFNCNVWDTLKADRAGVLAGHDNRVSCLGVTDDGMAVATGSWDSFLKIWN</sequence>
<dbReference type="EMBL" id="X86969">
    <property type="protein sequence ID" value="CAA60532.1"/>
    <property type="molecule type" value="mRNA"/>
</dbReference>
<dbReference type="SMR" id="P79959"/>
<dbReference type="AGR" id="Xenbase:XB-GENE-6076423"/>
<dbReference type="Xenbase" id="XB-GENE-6076423">
    <property type="gene designation" value="gnb1.S"/>
</dbReference>
<dbReference type="Proteomes" id="UP000186698">
    <property type="component" value="Unplaced"/>
</dbReference>
<dbReference type="GO" id="GO:0005737">
    <property type="term" value="C:cytoplasm"/>
    <property type="evidence" value="ECO:0000318"/>
    <property type="project" value="GO_Central"/>
</dbReference>
<dbReference type="GO" id="GO:0005834">
    <property type="term" value="C:heterotrimeric G-protein complex"/>
    <property type="evidence" value="ECO:0000318"/>
    <property type="project" value="GO_Central"/>
</dbReference>
<dbReference type="GO" id="GO:0030159">
    <property type="term" value="F:signaling receptor complex adaptor activity"/>
    <property type="evidence" value="ECO:0000318"/>
    <property type="project" value="GO_Central"/>
</dbReference>
<dbReference type="GO" id="GO:0007186">
    <property type="term" value="P:G protein-coupled receptor signaling pathway"/>
    <property type="evidence" value="ECO:0000318"/>
    <property type="project" value="GO_Central"/>
</dbReference>
<dbReference type="CDD" id="cd00200">
    <property type="entry name" value="WD40"/>
    <property type="match status" value="1"/>
</dbReference>
<dbReference type="FunFam" id="2.130.10.10:FF:000007">
    <property type="entry name" value="Guanine nucleotide-binding protein G(I)/G(S)/G(T) subunit beta-1"/>
    <property type="match status" value="1"/>
</dbReference>
<dbReference type="Gene3D" id="2.130.10.10">
    <property type="entry name" value="YVTN repeat-like/Quinoprotein amine dehydrogenase"/>
    <property type="match status" value="1"/>
</dbReference>
<dbReference type="InterPro" id="IPR020472">
    <property type="entry name" value="G-protein_beta_WD-40_rep"/>
</dbReference>
<dbReference type="InterPro" id="IPR001632">
    <property type="entry name" value="Gprotein_B"/>
</dbReference>
<dbReference type="InterPro" id="IPR016346">
    <property type="entry name" value="Guanine_nucleotide-bd_bsu"/>
</dbReference>
<dbReference type="InterPro" id="IPR015943">
    <property type="entry name" value="WD40/YVTN_repeat-like_dom_sf"/>
</dbReference>
<dbReference type="InterPro" id="IPR019775">
    <property type="entry name" value="WD40_repeat_CS"/>
</dbReference>
<dbReference type="InterPro" id="IPR036322">
    <property type="entry name" value="WD40_repeat_dom_sf"/>
</dbReference>
<dbReference type="InterPro" id="IPR001680">
    <property type="entry name" value="WD40_rpt"/>
</dbReference>
<dbReference type="PANTHER" id="PTHR19850">
    <property type="entry name" value="GUANINE NUCLEOTIDE-BINDING PROTEIN BETA G PROTEIN BETA"/>
    <property type="match status" value="1"/>
</dbReference>
<dbReference type="Pfam" id="PF25391">
    <property type="entry name" value="WD40_Gbeta"/>
    <property type="match status" value="1"/>
</dbReference>
<dbReference type="PIRSF" id="PIRSF002394">
    <property type="entry name" value="GN-bd_beta"/>
    <property type="match status" value="1"/>
</dbReference>
<dbReference type="PRINTS" id="PR00319">
    <property type="entry name" value="GPROTEINB"/>
</dbReference>
<dbReference type="PRINTS" id="PR00320">
    <property type="entry name" value="GPROTEINBRPT"/>
</dbReference>
<dbReference type="SMART" id="SM00320">
    <property type="entry name" value="WD40"/>
    <property type="match status" value="7"/>
</dbReference>
<dbReference type="SUPFAM" id="SSF50978">
    <property type="entry name" value="WD40 repeat-like"/>
    <property type="match status" value="1"/>
</dbReference>
<dbReference type="PROSITE" id="PS00678">
    <property type="entry name" value="WD_REPEATS_1"/>
    <property type="match status" value="3"/>
</dbReference>
<dbReference type="PROSITE" id="PS50082">
    <property type="entry name" value="WD_REPEATS_2"/>
    <property type="match status" value="6"/>
</dbReference>
<dbReference type="PROSITE" id="PS50294">
    <property type="entry name" value="WD_REPEATS_REGION"/>
    <property type="match status" value="1"/>
</dbReference>
<organism>
    <name type="scientific">Xenopus laevis</name>
    <name type="common">African clawed frog</name>
    <dbReference type="NCBI Taxonomy" id="8355"/>
    <lineage>
        <taxon>Eukaryota</taxon>
        <taxon>Metazoa</taxon>
        <taxon>Chordata</taxon>
        <taxon>Craniata</taxon>
        <taxon>Vertebrata</taxon>
        <taxon>Euteleostomi</taxon>
        <taxon>Amphibia</taxon>
        <taxon>Batrachia</taxon>
        <taxon>Anura</taxon>
        <taxon>Pipoidea</taxon>
        <taxon>Pipidae</taxon>
        <taxon>Xenopodinae</taxon>
        <taxon>Xenopus</taxon>
        <taxon>Xenopus</taxon>
    </lineage>
</organism>
<evidence type="ECO:0000305" key="1"/>
<proteinExistence type="evidence at transcript level"/>
<feature type="chain" id="PRO_0000127692" description="Guanine nucleotide-binding protein G(I)/G(S)/G(T) subunit beta-1">
    <location>
        <begin position="1"/>
        <end position="340"/>
    </location>
</feature>
<feature type="repeat" description="WD 1">
    <location>
        <begin position="53"/>
        <end position="83"/>
    </location>
</feature>
<feature type="repeat" description="WD 2">
    <location>
        <begin position="95"/>
        <end position="125"/>
    </location>
</feature>
<feature type="repeat" description="WD 3">
    <location>
        <begin position="141"/>
        <end position="170"/>
    </location>
</feature>
<feature type="repeat" description="WD 4">
    <location>
        <begin position="182"/>
        <end position="212"/>
    </location>
</feature>
<feature type="repeat" description="WD 5">
    <location>
        <begin position="224"/>
        <end position="254"/>
    </location>
</feature>
<feature type="repeat" description="WD 6">
    <location>
        <begin position="268"/>
        <end position="298"/>
    </location>
</feature>
<feature type="repeat" description="WD 7">
    <location>
        <begin position="310"/>
        <end position="340"/>
    </location>
</feature>
<reference key="1">
    <citation type="journal article" date="1996" name="Mech. Dev.">
        <title>The mRNA encoding a beta subunit of heterotrimeric GTP-binding proteins is localized to the animal pole of Xenopus laevis oocyte and embryos.</title>
        <authorList>
            <person name="Devic E."/>
            <person name="Paquereau L."/>
            <person name="Rizzoti K."/>
            <person name="Monier A."/>
            <person name="Knibiehler B."/>
            <person name="Audigier Y."/>
        </authorList>
    </citation>
    <scope>NUCLEOTIDE SEQUENCE [MRNA]</scope>
</reference>
<accession>P79959</accession>
<name>GBB1_XENLA</name>
<gene>
    <name type="primary">gnb1</name>
</gene>